<reference key="1">
    <citation type="journal article" date="2003" name="Proc. Natl. Acad. Sci. U.S.A.">
        <title>The complete genome sequence of Mycobacterium bovis.</title>
        <authorList>
            <person name="Garnier T."/>
            <person name="Eiglmeier K."/>
            <person name="Camus J.-C."/>
            <person name="Medina N."/>
            <person name="Mansoor H."/>
            <person name="Pryor M."/>
            <person name="Duthoy S."/>
            <person name="Grondin S."/>
            <person name="Lacroix C."/>
            <person name="Monsempe C."/>
            <person name="Simon S."/>
            <person name="Harris B."/>
            <person name="Atkin R."/>
            <person name="Doggett J."/>
            <person name="Mayes R."/>
            <person name="Keating L."/>
            <person name="Wheeler P.R."/>
            <person name="Parkhill J."/>
            <person name="Barrell B.G."/>
            <person name="Cole S.T."/>
            <person name="Gordon S.V."/>
            <person name="Hewinson R.G."/>
        </authorList>
    </citation>
    <scope>NUCLEOTIDE SEQUENCE [LARGE SCALE GENOMIC DNA]</scope>
    <source>
        <strain>ATCC BAA-935 / AF2122/97</strain>
    </source>
</reference>
<reference key="2">
    <citation type="journal article" date="2017" name="Genome Announc.">
        <title>Updated reference genome sequence and annotation of Mycobacterium bovis AF2122/97.</title>
        <authorList>
            <person name="Malone K.M."/>
            <person name="Farrell D."/>
            <person name="Stuber T.P."/>
            <person name="Schubert O.T."/>
            <person name="Aebersold R."/>
            <person name="Robbe-Austerman S."/>
            <person name="Gordon S.V."/>
        </authorList>
    </citation>
    <scope>NUCLEOTIDE SEQUENCE [LARGE SCALE GENOMIC DNA]</scope>
    <scope>GENOME REANNOTATION</scope>
    <source>
        <strain>ATCC BAA-935 / AF2122/97</strain>
    </source>
</reference>
<keyword id="KW-0378">Hydrolase</keyword>
<keyword id="KW-0460">Magnesium</keyword>
<keyword id="KW-0479">Metal-binding</keyword>
<keyword id="KW-1185">Reference proteome</keyword>
<protein>
    <recommendedName>
        <fullName>Inositol-1-monophosphatase</fullName>
        <shortName>I-1-Pase</shortName>
        <shortName>IMPase</shortName>
        <shortName>Inositol-1-phosphatase</shortName>
        <ecNumber>3.1.3.25</ecNumber>
    </recommendedName>
</protein>
<gene>
    <name type="primary">suhB</name>
    <name type="ordered locus">BQ2027_MB2720C</name>
</gene>
<name>SUHB_MYCBO</name>
<dbReference type="EC" id="3.1.3.25"/>
<dbReference type="EMBL" id="LT708304">
    <property type="protein sequence ID" value="SIU01338.1"/>
    <property type="molecule type" value="Genomic_DNA"/>
</dbReference>
<dbReference type="RefSeq" id="NP_856366.1">
    <property type="nucleotide sequence ID" value="NC_002945.3"/>
</dbReference>
<dbReference type="RefSeq" id="WP_003413939.1">
    <property type="nucleotide sequence ID" value="NC_002945.4"/>
</dbReference>
<dbReference type="SMR" id="P65166"/>
<dbReference type="GeneID" id="45426689"/>
<dbReference type="KEGG" id="mbo:BQ2027_MB2720C"/>
<dbReference type="PATRIC" id="fig|233413.5.peg.2982"/>
<dbReference type="Proteomes" id="UP000001419">
    <property type="component" value="Chromosome"/>
</dbReference>
<dbReference type="GO" id="GO:0008934">
    <property type="term" value="F:inositol monophosphate 1-phosphatase activity"/>
    <property type="evidence" value="ECO:0007669"/>
    <property type="project" value="InterPro"/>
</dbReference>
<dbReference type="GO" id="GO:0046872">
    <property type="term" value="F:metal ion binding"/>
    <property type="evidence" value="ECO:0007669"/>
    <property type="project" value="UniProtKB-KW"/>
</dbReference>
<dbReference type="GO" id="GO:0006020">
    <property type="term" value="P:inositol metabolic process"/>
    <property type="evidence" value="ECO:0007669"/>
    <property type="project" value="TreeGrafter"/>
</dbReference>
<dbReference type="GO" id="GO:0046854">
    <property type="term" value="P:phosphatidylinositol phosphate biosynthetic process"/>
    <property type="evidence" value="ECO:0007669"/>
    <property type="project" value="InterPro"/>
</dbReference>
<dbReference type="GO" id="GO:0007165">
    <property type="term" value="P:signal transduction"/>
    <property type="evidence" value="ECO:0007669"/>
    <property type="project" value="TreeGrafter"/>
</dbReference>
<dbReference type="CDD" id="cd01639">
    <property type="entry name" value="IMPase"/>
    <property type="match status" value="1"/>
</dbReference>
<dbReference type="FunFam" id="3.40.190.80:FF:000022">
    <property type="entry name" value="Inositol-1-monophosphatase"/>
    <property type="match status" value="1"/>
</dbReference>
<dbReference type="Gene3D" id="3.40.190.80">
    <property type="match status" value="1"/>
</dbReference>
<dbReference type="Gene3D" id="3.30.540.10">
    <property type="entry name" value="Fructose-1,6-Bisphosphatase, subunit A, domain 1"/>
    <property type="match status" value="1"/>
</dbReference>
<dbReference type="InterPro" id="IPR033942">
    <property type="entry name" value="IMPase"/>
</dbReference>
<dbReference type="InterPro" id="IPR020583">
    <property type="entry name" value="Inositol_monoP_metal-BS"/>
</dbReference>
<dbReference type="InterPro" id="IPR000760">
    <property type="entry name" value="Inositol_monophosphatase-like"/>
</dbReference>
<dbReference type="InterPro" id="IPR020550">
    <property type="entry name" value="Inositol_monophosphatase_CS"/>
</dbReference>
<dbReference type="PANTHER" id="PTHR20854">
    <property type="entry name" value="INOSITOL MONOPHOSPHATASE"/>
    <property type="match status" value="1"/>
</dbReference>
<dbReference type="PANTHER" id="PTHR20854:SF4">
    <property type="entry name" value="INOSITOL-1-MONOPHOSPHATASE-RELATED"/>
    <property type="match status" value="1"/>
</dbReference>
<dbReference type="Pfam" id="PF00459">
    <property type="entry name" value="Inositol_P"/>
    <property type="match status" value="1"/>
</dbReference>
<dbReference type="PRINTS" id="PR00377">
    <property type="entry name" value="IMPHPHTASES"/>
</dbReference>
<dbReference type="SUPFAM" id="SSF56655">
    <property type="entry name" value="Carbohydrate phosphatase"/>
    <property type="match status" value="1"/>
</dbReference>
<dbReference type="PROSITE" id="PS00629">
    <property type="entry name" value="IMP_1"/>
    <property type="match status" value="1"/>
</dbReference>
<dbReference type="PROSITE" id="PS00630">
    <property type="entry name" value="IMP_2"/>
    <property type="match status" value="1"/>
</dbReference>
<sequence>MTRPDNEPARLRSVAENLAAEAAAFVRGRRAEVFGISRAGDGDGAVRAKSSPTDPVTVVDTDTERLLRDRLAQLRPGDPILGEEGGGPADVTATPSDRVTWVLDPIDGTVNFVYGIPAYAVSIGAQVGGITVAGAVADVAARTVYSAATGLGAHLTDERGRHVLRCTGVDELSMALLGTGFGYSVRCREKQAELLAHVVPLVRDVRRIGSAALDLCMVAAGRLDAYYEHGVQVWDCAAGALIAAEAGARVLLSTPRAGGAGLVVVAAAPGIADELLAALQRFNGLEPIPD</sequence>
<organism>
    <name type="scientific">Mycobacterium bovis (strain ATCC BAA-935 / AF2122/97)</name>
    <dbReference type="NCBI Taxonomy" id="233413"/>
    <lineage>
        <taxon>Bacteria</taxon>
        <taxon>Bacillati</taxon>
        <taxon>Actinomycetota</taxon>
        <taxon>Actinomycetes</taxon>
        <taxon>Mycobacteriales</taxon>
        <taxon>Mycobacteriaceae</taxon>
        <taxon>Mycobacterium</taxon>
        <taxon>Mycobacterium tuberculosis complex</taxon>
    </lineage>
</organism>
<proteinExistence type="inferred from homology"/>
<accession>P65166</accession>
<accession>A0A1R3Y2C9</accession>
<accession>O07203</accession>
<accession>X2BLB6</accession>
<comment type="catalytic activity">
    <reaction>
        <text>a myo-inositol phosphate + H2O = myo-inositol + phosphate</text>
        <dbReference type="Rhea" id="RHEA:24056"/>
        <dbReference type="ChEBI" id="CHEBI:15377"/>
        <dbReference type="ChEBI" id="CHEBI:17268"/>
        <dbReference type="ChEBI" id="CHEBI:43474"/>
        <dbReference type="ChEBI" id="CHEBI:84139"/>
        <dbReference type="EC" id="3.1.3.25"/>
    </reaction>
</comment>
<comment type="cofactor">
    <cofactor evidence="1">
        <name>Mg(2+)</name>
        <dbReference type="ChEBI" id="CHEBI:18420"/>
    </cofactor>
</comment>
<comment type="similarity">
    <text evidence="2">Belongs to the inositol monophosphatase superfamily.</text>
</comment>
<feature type="chain" id="PRO_0000142565" description="Inositol-1-monophosphatase">
    <location>
        <begin position="1"/>
        <end position="290"/>
    </location>
</feature>
<feature type="binding site" evidence="1">
    <location>
        <position position="83"/>
    </location>
    <ligand>
        <name>Mg(2+)</name>
        <dbReference type="ChEBI" id="CHEBI:18420"/>
        <label>1</label>
    </ligand>
</feature>
<feature type="binding site" evidence="1">
    <location>
        <position position="83"/>
    </location>
    <ligand>
        <name>substrate</name>
    </ligand>
</feature>
<feature type="binding site" evidence="1">
    <location>
        <position position="104"/>
    </location>
    <ligand>
        <name>Mg(2+)</name>
        <dbReference type="ChEBI" id="CHEBI:18420"/>
        <label>1</label>
    </ligand>
</feature>
<feature type="binding site" evidence="1">
    <location>
        <position position="104"/>
    </location>
    <ligand>
        <name>Mg(2+)</name>
        <dbReference type="ChEBI" id="CHEBI:18420"/>
        <label>2</label>
    </ligand>
</feature>
<feature type="binding site" evidence="1">
    <location>
        <begin position="106"/>
        <end position="109"/>
    </location>
    <ligand>
        <name>substrate</name>
    </ligand>
</feature>
<feature type="binding site" evidence="1">
    <location>
        <position position="106"/>
    </location>
    <ligand>
        <name>Mg(2+)</name>
        <dbReference type="ChEBI" id="CHEBI:18420"/>
        <label>1</label>
    </ligand>
</feature>
<feature type="binding site" evidence="1">
    <location>
        <position position="107"/>
    </location>
    <ligand>
        <name>Mg(2+)</name>
        <dbReference type="ChEBI" id="CHEBI:18420"/>
        <label>2</label>
    </ligand>
</feature>
<feature type="binding site" evidence="1">
    <location>
        <position position="206"/>
    </location>
    <ligand>
        <name>substrate</name>
    </ligand>
</feature>
<feature type="binding site" evidence="1">
    <location>
        <position position="235"/>
    </location>
    <ligand>
        <name>Mg(2+)</name>
        <dbReference type="ChEBI" id="CHEBI:18420"/>
        <label>2</label>
    </ligand>
</feature>
<feature type="binding site" evidence="1">
    <location>
        <position position="235"/>
    </location>
    <ligand>
        <name>substrate</name>
    </ligand>
</feature>
<evidence type="ECO:0000250" key="1"/>
<evidence type="ECO:0000305" key="2"/>